<comment type="function">
    <text evidence="1">One of the primary rRNA binding proteins, it binds directly to 16S rRNA where it nucleates assembly of the body of the 30S subunit.</text>
</comment>
<comment type="function">
    <text evidence="1">With S5 and S12 plays an important role in translational accuracy.</text>
</comment>
<comment type="subunit">
    <text evidence="1">Part of the 30S ribosomal subunit. Contacts protein S5. The interaction surface between S4 and S5 is involved in control of translational fidelity.</text>
</comment>
<comment type="similarity">
    <text evidence="1">Belongs to the universal ribosomal protein uS4 family.</text>
</comment>
<protein>
    <recommendedName>
        <fullName evidence="1">Small ribosomal subunit protein uS4</fullName>
    </recommendedName>
    <alternativeName>
        <fullName evidence="3">30S ribosomal protein S4</fullName>
    </alternativeName>
</protein>
<sequence>MSKRLESKYKINRRLGVNLWGRAKSPVNKREYGPGQHGQRRKQKPSDFSVQLMAKQKLKGYYGNISEKQFRKYYDEAVRRKGDTSENLIDLLERRLDAVVYRLKFAMTPFAARQFVSHGHITVNGRKVNIPSYIVRDEDVIEVREKSKHLAIVLDAAQSGERDVPEYMEVDHRQMKGRFLRAPKLSDVPYPVQMEPNLVIEFYSR</sequence>
<feature type="chain" id="PRO_1000085976" description="Small ribosomal subunit protein uS4">
    <location>
        <begin position="1"/>
        <end position="205"/>
    </location>
</feature>
<feature type="domain" description="S4 RNA-binding" evidence="1">
    <location>
        <begin position="94"/>
        <end position="154"/>
    </location>
</feature>
<feature type="region of interest" description="Disordered" evidence="2">
    <location>
        <begin position="26"/>
        <end position="47"/>
    </location>
</feature>
<organism>
    <name type="scientific">Gluconacetobacter diazotrophicus (strain ATCC 49037 / DSM 5601 / CCUG 37298 / CIP 103539 / LMG 7603 / PAl5)</name>
    <dbReference type="NCBI Taxonomy" id="272568"/>
    <lineage>
        <taxon>Bacteria</taxon>
        <taxon>Pseudomonadati</taxon>
        <taxon>Pseudomonadota</taxon>
        <taxon>Alphaproteobacteria</taxon>
        <taxon>Acetobacterales</taxon>
        <taxon>Acetobacteraceae</taxon>
        <taxon>Gluconacetobacter</taxon>
    </lineage>
</organism>
<name>RS4_GLUDA</name>
<dbReference type="EMBL" id="AM889285">
    <property type="protein sequence ID" value="CAP56139.1"/>
    <property type="molecule type" value="Genomic_DNA"/>
</dbReference>
<dbReference type="EMBL" id="CP001189">
    <property type="protein sequence ID" value="ACI50212.1"/>
    <property type="molecule type" value="Genomic_DNA"/>
</dbReference>
<dbReference type="RefSeq" id="WP_012226043.1">
    <property type="nucleotide sequence ID" value="NC_010125.1"/>
</dbReference>
<dbReference type="SMR" id="A9HL98"/>
<dbReference type="STRING" id="272568.GDI2196"/>
<dbReference type="KEGG" id="gdi:GDI2196"/>
<dbReference type="KEGG" id="gdj:Gdia_0416"/>
<dbReference type="eggNOG" id="COG0522">
    <property type="taxonomic scope" value="Bacteria"/>
</dbReference>
<dbReference type="HOGENOM" id="CLU_092403_0_0_5"/>
<dbReference type="OrthoDB" id="9803672at2"/>
<dbReference type="Proteomes" id="UP000001176">
    <property type="component" value="Chromosome"/>
</dbReference>
<dbReference type="GO" id="GO:0015935">
    <property type="term" value="C:small ribosomal subunit"/>
    <property type="evidence" value="ECO:0007669"/>
    <property type="project" value="InterPro"/>
</dbReference>
<dbReference type="GO" id="GO:0019843">
    <property type="term" value="F:rRNA binding"/>
    <property type="evidence" value="ECO:0007669"/>
    <property type="project" value="UniProtKB-UniRule"/>
</dbReference>
<dbReference type="GO" id="GO:0003735">
    <property type="term" value="F:structural constituent of ribosome"/>
    <property type="evidence" value="ECO:0007669"/>
    <property type="project" value="InterPro"/>
</dbReference>
<dbReference type="GO" id="GO:0042274">
    <property type="term" value="P:ribosomal small subunit biogenesis"/>
    <property type="evidence" value="ECO:0007669"/>
    <property type="project" value="TreeGrafter"/>
</dbReference>
<dbReference type="GO" id="GO:0006412">
    <property type="term" value="P:translation"/>
    <property type="evidence" value="ECO:0007669"/>
    <property type="project" value="UniProtKB-UniRule"/>
</dbReference>
<dbReference type="CDD" id="cd00165">
    <property type="entry name" value="S4"/>
    <property type="match status" value="1"/>
</dbReference>
<dbReference type="FunFam" id="3.10.290.10:FF:000001">
    <property type="entry name" value="30S ribosomal protein S4"/>
    <property type="match status" value="1"/>
</dbReference>
<dbReference type="Gene3D" id="1.10.1050.10">
    <property type="entry name" value="Ribosomal Protein S4 Delta 41, Chain A, domain 1"/>
    <property type="match status" value="1"/>
</dbReference>
<dbReference type="Gene3D" id="3.10.290.10">
    <property type="entry name" value="RNA-binding S4 domain"/>
    <property type="match status" value="1"/>
</dbReference>
<dbReference type="HAMAP" id="MF_01306_B">
    <property type="entry name" value="Ribosomal_uS4_B"/>
    <property type="match status" value="1"/>
</dbReference>
<dbReference type="InterPro" id="IPR022801">
    <property type="entry name" value="Ribosomal_uS4"/>
</dbReference>
<dbReference type="InterPro" id="IPR005709">
    <property type="entry name" value="Ribosomal_uS4_bac-type"/>
</dbReference>
<dbReference type="InterPro" id="IPR018079">
    <property type="entry name" value="Ribosomal_uS4_CS"/>
</dbReference>
<dbReference type="InterPro" id="IPR001912">
    <property type="entry name" value="Ribosomal_uS4_N"/>
</dbReference>
<dbReference type="InterPro" id="IPR002942">
    <property type="entry name" value="S4_RNA-bd"/>
</dbReference>
<dbReference type="InterPro" id="IPR036986">
    <property type="entry name" value="S4_RNA-bd_sf"/>
</dbReference>
<dbReference type="NCBIfam" id="NF003717">
    <property type="entry name" value="PRK05327.1"/>
    <property type="match status" value="1"/>
</dbReference>
<dbReference type="NCBIfam" id="TIGR01017">
    <property type="entry name" value="rpsD_bact"/>
    <property type="match status" value="1"/>
</dbReference>
<dbReference type="PANTHER" id="PTHR11831">
    <property type="entry name" value="30S 40S RIBOSOMAL PROTEIN"/>
    <property type="match status" value="1"/>
</dbReference>
<dbReference type="PANTHER" id="PTHR11831:SF4">
    <property type="entry name" value="SMALL RIBOSOMAL SUBUNIT PROTEIN US4M"/>
    <property type="match status" value="1"/>
</dbReference>
<dbReference type="Pfam" id="PF00163">
    <property type="entry name" value="Ribosomal_S4"/>
    <property type="match status" value="1"/>
</dbReference>
<dbReference type="Pfam" id="PF01479">
    <property type="entry name" value="S4"/>
    <property type="match status" value="1"/>
</dbReference>
<dbReference type="SMART" id="SM01390">
    <property type="entry name" value="Ribosomal_S4"/>
    <property type="match status" value="1"/>
</dbReference>
<dbReference type="SMART" id="SM00363">
    <property type="entry name" value="S4"/>
    <property type="match status" value="1"/>
</dbReference>
<dbReference type="SUPFAM" id="SSF55174">
    <property type="entry name" value="Alpha-L RNA-binding motif"/>
    <property type="match status" value="1"/>
</dbReference>
<dbReference type="PROSITE" id="PS00632">
    <property type="entry name" value="RIBOSOMAL_S4"/>
    <property type="match status" value="1"/>
</dbReference>
<dbReference type="PROSITE" id="PS50889">
    <property type="entry name" value="S4"/>
    <property type="match status" value="1"/>
</dbReference>
<evidence type="ECO:0000255" key="1">
    <source>
        <dbReference type="HAMAP-Rule" id="MF_01306"/>
    </source>
</evidence>
<evidence type="ECO:0000256" key="2">
    <source>
        <dbReference type="SAM" id="MobiDB-lite"/>
    </source>
</evidence>
<evidence type="ECO:0000305" key="3"/>
<accession>A9HL98</accession>
<accession>B5ZCE8</accession>
<proteinExistence type="inferred from homology"/>
<reference key="1">
    <citation type="journal article" date="2009" name="BMC Genomics">
        <title>Complete genome sequence of the sugarcane nitrogen-fixing endophyte Gluconacetobacter diazotrophicus Pal5.</title>
        <authorList>
            <person name="Bertalan M."/>
            <person name="Albano R."/>
            <person name="de Padua V."/>
            <person name="Rouws L."/>
            <person name="Rojas C."/>
            <person name="Hemerly A."/>
            <person name="Teixeira K."/>
            <person name="Schwab S."/>
            <person name="Araujo J."/>
            <person name="Oliveira A."/>
            <person name="Franca L."/>
            <person name="Magalhaes V."/>
            <person name="Alqueres S."/>
            <person name="Cardoso A."/>
            <person name="Almeida W."/>
            <person name="Loureiro M.M."/>
            <person name="Nogueira E."/>
            <person name="Cidade D."/>
            <person name="Oliveira D."/>
            <person name="Simao T."/>
            <person name="Macedo J."/>
            <person name="Valadao A."/>
            <person name="Dreschsel M."/>
            <person name="Freitas F."/>
            <person name="Vidal M."/>
            <person name="Guedes H."/>
            <person name="Rodrigues E."/>
            <person name="Meneses C."/>
            <person name="Brioso P."/>
            <person name="Pozzer L."/>
            <person name="Figueiredo D."/>
            <person name="Montano H."/>
            <person name="Junior J."/>
            <person name="de Souza Filho G."/>
            <person name="Martin Quintana Flores V."/>
            <person name="Ferreira B."/>
            <person name="Branco A."/>
            <person name="Gonzalez P."/>
            <person name="Guillobel H."/>
            <person name="Lemos M."/>
            <person name="Seibel L."/>
            <person name="Macedo J."/>
            <person name="Alves-Ferreira M."/>
            <person name="Sachetto-Martins G."/>
            <person name="Coelho A."/>
            <person name="Santos E."/>
            <person name="Amaral G."/>
            <person name="Neves A."/>
            <person name="Pacheco A.B."/>
            <person name="Carvalho D."/>
            <person name="Lery L."/>
            <person name="Bisch P."/>
            <person name="Rossle S.C."/>
            <person name="Urmenyi T."/>
            <person name="Rael Pereira A."/>
            <person name="Silva R."/>
            <person name="Rondinelli E."/>
            <person name="von Kruger W."/>
            <person name="Martins O."/>
            <person name="Baldani J.I."/>
            <person name="Ferreira P.C."/>
        </authorList>
    </citation>
    <scope>NUCLEOTIDE SEQUENCE [LARGE SCALE GENOMIC DNA]</scope>
    <source>
        <strain>ATCC 49037 / DSM 5601 / CCUG 37298 / CIP 103539 / LMG 7603 / PAl5</strain>
    </source>
</reference>
<reference key="2">
    <citation type="journal article" date="2010" name="Stand. Genomic Sci.">
        <title>Two genome sequences of the same bacterial strain, Gluconacetobacter diazotrophicus PAl 5, suggest a new standard in genome sequence submission.</title>
        <authorList>
            <person name="Giongo A."/>
            <person name="Tyler H.L."/>
            <person name="Zipperer U.N."/>
            <person name="Triplett E.W."/>
        </authorList>
    </citation>
    <scope>NUCLEOTIDE SEQUENCE [LARGE SCALE GENOMIC DNA]</scope>
    <source>
        <strain>ATCC 49037 / DSM 5601 / CCUG 37298 / CIP 103539 / LMG 7603 / PAl5</strain>
    </source>
</reference>
<gene>
    <name evidence="1" type="primary">rpsD</name>
    <name type="ordered locus">GDI2196</name>
    <name type="ordered locus">Gdia_0416</name>
</gene>
<keyword id="KW-1185">Reference proteome</keyword>
<keyword id="KW-0687">Ribonucleoprotein</keyword>
<keyword id="KW-0689">Ribosomal protein</keyword>
<keyword id="KW-0694">RNA-binding</keyword>
<keyword id="KW-0699">rRNA-binding</keyword>